<accession>P52366</accession>
<gene>
    <name evidence="1" type="primary">gN</name>
    <name type="ORF">U46</name>
</gene>
<feature type="signal peptide" evidence="1">
    <location>
        <begin position="1"/>
        <end position="29"/>
    </location>
</feature>
<feature type="chain" id="PRO_0000116217" description="Envelope glycoprotein N" evidence="1">
    <location>
        <begin position="30"/>
        <end position="86"/>
    </location>
</feature>
<feature type="topological domain" description="Virion surface" evidence="1">
    <location>
        <begin position="30"/>
        <end position="47"/>
    </location>
</feature>
<feature type="transmembrane region" description="Helical" evidence="1">
    <location>
        <begin position="48"/>
        <end position="68"/>
    </location>
</feature>
<feature type="topological domain" description="Intravirion" evidence="1">
    <location>
        <begin position="69"/>
        <end position="86"/>
    </location>
</feature>
<feature type="disulfide bond" description="Interchain (with gM)" evidence="1">
    <location>
        <position position="38"/>
    </location>
</feature>
<sequence length="86" mass="10196">MTLYKIVSKPIILLAFFFTRVVFTNEVDGEELFYKPTCHSDTYEIILKKFSSIWILVNTFILLCSFSLFLKYWCFKTLAKETVKGY</sequence>
<dbReference type="EMBL" id="U43400">
    <property type="protein sequence ID" value="AAC54708.1"/>
    <property type="molecule type" value="Genomic_DNA"/>
</dbReference>
<dbReference type="PIR" id="T41948">
    <property type="entry name" value="T41948"/>
</dbReference>
<dbReference type="RefSeq" id="YP_073786.1">
    <property type="nucleotide sequence ID" value="NC_001716.2"/>
</dbReference>
<dbReference type="DNASU" id="3289504"/>
<dbReference type="GeneID" id="3289504"/>
<dbReference type="KEGG" id="vg:3289504"/>
<dbReference type="Proteomes" id="UP000009246">
    <property type="component" value="Segment"/>
</dbReference>
<dbReference type="GO" id="GO:0044177">
    <property type="term" value="C:host cell Golgi apparatus"/>
    <property type="evidence" value="ECO:0007669"/>
    <property type="project" value="UniProtKB-SubCell"/>
</dbReference>
<dbReference type="GO" id="GO:0033644">
    <property type="term" value="C:host cell membrane"/>
    <property type="evidence" value="ECO:0007669"/>
    <property type="project" value="UniProtKB-SubCell"/>
</dbReference>
<dbReference type="GO" id="GO:0016020">
    <property type="term" value="C:membrane"/>
    <property type="evidence" value="ECO:0007669"/>
    <property type="project" value="UniProtKB-KW"/>
</dbReference>
<dbReference type="GO" id="GO:0019031">
    <property type="term" value="C:viral envelope"/>
    <property type="evidence" value="ECO:0007669"/>
    <property type="project" value="UniProtKB-KW"/>
</dbReference>
<dbReference type="GO" id="GO:0055036">
    <property type="term" value="C:virion membrane"/>
    <property type="evidence" value="ECO:0007669"/>
    <property type="project" value="UniProtKB-SubCell"/>
</dbReference>
<dbReference type="HAMAP" id="MF_04037">
    <property type="entry name" value="HSV_GN"/>
    <property type="match status" value="1"/>
</dbReference>
<dbReference type="InterPro" id="IPR005211">
    <property type="entry name" value="Herpes_glycoprotein_N_domain"/>
</dbReference>
<dbReference type="InterPro" id="IPR034707">
    <property type="entry name" value="HSV_GN"/>
</dbReference>
<dbReference type="Pfam" id="PF03554">
    <property type="entry name" value="Herpes_UL73"/>
    <property type="match status" value="1"/>
</dbReference>
<organismHost>
    <name type="scientific">Homo sapiens</name>
    <name type="common">Human</name>
    <dbReference type="NCBI Taxonomy" id="9606"/>
</organismHost>
<keyword id="KW-1015">Disulfide bond</keyword>
<keyword id="KW-1040">Host Golgi apparatus</keyword>
<keyword id="KW-1043">Host membrane</keyword>
<keyword id="KW-0472">Membrane</keyword>
<keyword id="KW-1185">Reference proteome</keyword>
<keyword id="KW-0732">Signal</keyword>
<keyword id="KW-0812">Transmembrane</keyword>
<keyword id="KW-1133">Transmembrane helix</keyword>
<keyword id="KW-0261">Viral envelope protein</keyword>
<keyword id="KW-0946">Virion</keyword>
<organism>
    <name type="scientific">Human herpesvirus 7 (strain JI)</name>
    <name type="common">HHV-7</name>
    <name type="synonym">Human T lymphotropic virus</name>
    <dbReference type="NCBI Taxonomy" id="57278"/>
    <lineage>
        <taxon>Viruses</taxon>
        <taxon>Duplodnaviria</taxon>
        <taxon>Heunggongvirae</taxon>
        <taxon>Peploviricota</taxon>
        <taxon>Herviviricetes</taxon>
        <taxon>Herpesvirales</taxon>
        <taxon>Orthoherpesviridae</taxon>
        <taxon>Betaherpesvirinae</taxon>
        <taxon>Roseolovirus</taxon>
        <taxon>Roseolovirus humanbeta7</taxon>
        <taxon>Human betaherpesvirus 7</taxon>
    </lineage>
</organism>
<name>GN_HHV7J</name>
<protein>
    <recommendedName>
        <fullName evidence="1">Envelope glycoprotein N</fullName>
    </recommendedName>
</protein>
<evidence type="ECO:0000255" key="1">
    <source>
        <dbReference type="HAMAP-Rule" id="MF_04037"/>
    </source>
</evidence>
<comment type="function">
    <text evidence="1">Envelope glycoprotein necessary for proper maturation of gM and modulation of its membrane fusion activity. Also plays a critical role in virion morphogenesis.</text>
</comment>
<comment type="subunit">
    <text evidence="1">Interacts (via N-terminus) with gM (via N-terminus). The gM-gN heterodimer forms the gCII complex.</text>
</comment>
<comment type="subcellular location">
    <subcellularLocation>
        <location evidence="1">Virion membrane</location>
        <topology evidence="1">Single-pass type I membrane protein</topology>
    </subcellularLocation>
    <subcellularLocation>
        <location evidence="1">Host membrane</location>
        <topology evidence="1">Single-pass type I membrane protein</topology>
    </subcellularLocation>
    <subcellularLocation>
        <location evidence="1">Host Golgi apparatus</location>
        <location evidence="1">Host trans-Golgi network</location>
    </subcellularLocation>
    <text evidence="1">When coexpressed with gM, localizes in the host trans-Golgi network.</text>
</comment>
<comment type="similarity">
    <text evidence="1">Belongs to the herpesviridae glycoprotein N family.</text>
</comment>
<reference key="1">
    <citation type="journal article" date="1996" name="J. Virol.">
        <title>Determination and analysis of the complete nucleotide sequence of human herpesvirus.</title>
        <authorList>
            <person name="Nicholas J."/>
        </authorList>
    </citation>
    <scope>NUCLEOTIDE SEQUENCE [LARGE SCALE GENOMIC DNA]</scope>
</reference>
<proteinExistence type="inferred from homology"/>